<gene>
    <name evidence="1" type="primary">lpxK</name>
    <name type="ordered locus">SF0911</name>
    <name type="ordered locus">S0975</name>
</gene>
<evidence type="ECO:0000255" key="1">
    <source>
        <dbReference type="HAMAP-Rule" id="MF_00409"/>
    </source>
</evidence>
<reference key="1">
    <citation type="journal article" date="2002" name="Nucleic Acids Res.">
        <title>Genome sequence of Shigella flexneri 2a: insights into pathogenicity through comparison with genomes of Escherichia coli K12 and O157.</title>
        <authorList>
            <person name="Jin Q."/>
            <person name="Yuan Z."/>
            <person name="Xu J."/>
            <person name="Wang Y."/>
            <person name="Shen Y."/>
            <person name="Lu W."/>
            <person name="Wang J."/>
            <person name="Liu H."/>
            <person name="Yang J."/>
            <person name="Yang F."/>
            <person name="Zhang X."/>
            <person name="Zhang J."/>
            <person name="Yang G."/>
            <person name="Wu H."/>
            <person name="Qu D."/>
            <person name="Dong J."/>
            <person name="Sun L."/>
            <person name="Xue Y."/>
            <person name="Zhao A."/>
            <person name="Gao Y."/>
            <person name="Zhu J."/>
            <person name="Kan B."/>
            <person name="Ding K."/>
            <person name="Chen S."/>
            <person name="Cheng H."/>
            <person name="Yao Z."/>
            <person name="He B."/>
            <person name="Chen R."/>
            <person name="Ma D."/>
            <person name="Qiang B."/>
            <person name="Wen Y."/>
            <person name="Hou Y."/>
            <person name="Yu J."/>
        </authorList>
    </citation>
    <scope>NUCLEOTIDE SEQUENCE [LARGE SCALE GENOMIC DNA]</scope>
    <source>
        <strain>301 / Serotype 2a</strain>
    </source>
</reference>
<reference key="2">
    <citation type="journal article" date="2003" name="Infect. Immun.">
        <title>Complete genome sequence and comparative genomics of Shigella flexneri serotype 2a strain 2457T.</title>
        <authorList>
            <person name="Wei J."/>
            <person name="Goldberg M.B."/>
            <person name="Burland V."/>
            <person name="Venkatesan M.M."/>
            <person name="Deng W."/>
            <person name="Fournier G."/>
            <person name="Mayhew G.F."/>
            <person name="Plunkett G. III"/>
            <person name="Rose D.J."/>
            <person name="Darling A."/>
            <person name="Mau B."/>
            <person name="Perna N.T."/>
            <person name="Payne S.M."/>
            <person name="Runyen-Janecky L.J."/>
            <person name="Zhou S."/>
            <person name="Schwartz D.C."/>
            <person name="Blattner F.R."/>
        </authorList>
    </citation>
    <scope>NUCLEOTIDE SEQUENCE [LARGE SCALE GENOMIC DNA]</scope>
    <source>
        <strain>ATCC 700930 / 2457T / Serotype 2a</strain>
    </source>
</reference>
<comment type="function">
    <text evidence="1">Transfers the gamma-phosphate of ATP to the 4'-position of a tetraacyldisaccharide 1-phosphate intermediate (termed DS-1-P) to form tetraacyldisaccharide 1,4'-bis-phosphate (lipid IVA).</text>
</comment>
<comment type="catalytic activity">
    <reaction evidence="1">
        <text>a lipid A disaccharide + ATP = a lipid IVA + ADP + H(+)</text>
        <dbReference type="Rhea" id="RHEA:67840"/>
        <dbReference type="ChEBI" id="CHEBI:15378"/>
        <dbReference type="ChEBI" id="CHEBI:30616"/>
        <dbReference type="ChEBI" id="CHEBI:176343"/>
        <dbReference type="ChEBI" id="CHEBI:176425"/>
        <dbReference type="ChEBI" id="CHEBI:456216"/>
        <dbReference type="EC" id="2.7.1.130"/>
    </reaction>
</comment>
<comment type="pathway">
    <text evidence="1">Glycolipid biosynthesis; lipid IV(A) biosynthesis; lipid IV(A) from (3R)-3-hydroxytetradecanoyl-[acyl-carrier-protein] and UDP-N-acetyl-alpha-D-glucosamine: step 6/6.</text>
</comment>
<comment type="similarity">
    <text evidence="1">Belongs to the LpxK family.</text>
</comment>
<proteinExistence type="inferred from homology"/>
<dbReference type="EC" id="2.7.1.130" evidence="1"/>
<dbReference type="EMBL" id="AE005674">
    <property type="protein sequence ID" value="AAN42540.1"/>
    <property type="molecule type" value="Genomic_DNA"/>
</dbReference>
<dbReference type="EMBL" id="AE014073">
    <property type="protein sequence ID" value="AAP16426.1"/>
    <property type="molecule type" value="Genomic_DNA"/>
</dbReference>
<dbReference type="RefSeq" id="NP_706833.1">
    <property type="nucleotide sequence ID" value="NC_004337.2"/>
</dbReference>
<dbReference type="RefSeq" id="WP_000570540.1">
    <property type="nucleotide sequence ID" value="NZ_UIPU01000075.1"/>
</dbReference>
<dbReference type="SMR" id="Q83RY7"/>
<dbReference type="STRING" id="198214.SF0911"/>
<dbReference type="PaxDb" id="198214-SF0911"/>
<dbReference type="GeneID" id="1023856"/>
<dbReference type="GeneID" id="93776500"/>
<dbReference type="KEGG" id="sfl:SF0911"/>
<dbReference type="KEGG" id="sfx:S0975"/>
<dbReference type="PATRIC" id="fig|198214.7.peg.1062"/>
<dbReference type="HOGENOM" id="CLU_038816_2_0_6"/>
<dbReference type="UniPathway" id="UPA00359">
    <property type="reaction ID" value="UER00482"/>
</dbReference>
<dbReference type="Proteomes" id="UP000001006">
    <property type="component" value="Chromosome"/>
</dbReference>
<dbReference type="Proteomes" id="UP000002673">
    <property type="component" value="Chromosome"/>
</dbReference>
<dbReference type="GO" id="GO:0005886">
    <property type="term" value="C:plasma membrane"/>
    <property type="evidence" value="ECO:0007669"/>
    <property type="project" value="TreeGrafter"/>
</dbReference>
<dbReference type="GO" id="GO:0005524">
    <property type="term" value="F:ATP binding"/>
    <property type="evidence" value="ECO:0007669"/>
    <property type="project" value="UniProtKB-UniRule"/>
</dbReference>
<dbReference type="GO" id="GO:0009029">
    <property type="term" value="F:tetraacyldisaccharide 4'-kinase activity"/>
    <property type="evidence" value="ECO:0007669"/>
    <property type="project" value="UniProtKB-UniRule"/>
</dbReference>
<dbReference type="GO" id="GO:0009245">
    <property type="term" value="P:lipid A biosynthetic process"/>
    <property type="evidence" value="ECO:0007669"/>
    <property type="project" value="UniProtKB-UniRule"/>
</dbReference>
<dbReference type="GO" id="GO:0009244">
    <property type="term" value="P:lipopolysaccharide core region biosynthetic process"/>
    <property type="evidence" value="ECO:0007669"/>
    <property type="project" value="TreeGrafter"/>
</dbReference>
<dbReference type="HAMAP" id="MF_00409">
    <property type="entry name" value="LpxK"/>
    <property type="match status" value="1"/>
</dbReference>
<dbReference type="InterPro" id="IPR003758">
    <property type="entry name" value="LpxK"/>
</dbReference>
<dbReference type="InterPro" id="IPR027417">
    <property type="entry name" value="P-loop_NTPase"/>
</dbReference>
<dbReference type="NCBIfam" id="TIGR00682">
    <property type="entry name" value="lpxK"/>
    <property type="match status" value="1"/>
</dbReference>
<dbReference type="PANTHER" id="PTHR42724">
    <property type="entry name" value="TETRAACYLDISACCHARIDE 4'-KINASE"/>
    <property type="match status" value="1"/>
</dbReference>
<dbReference type="PANTHER" id="PTHR42724:SF1">
    <property type="entry name" value="TETRAACYLDISACCHARIDE 4'-KINASE, MITOCHONDRIAL-RELATED"/>
    <property type="match status" value="1"/>
</dbReference>
<dbReference type="Pfam" id="PF02606">
    <property type="entry name" value="LpxK"/>
    <property type="match status" value="1"/>
</dbReference>
<dbReference type="SUPFAM" id="SSF52540">
    <property type="entry name" value="P-loop containing nucleoside triphosphate hydrolases"/>
    <property type="match status" value="1"/>
</dbReference>
<sequence>MIEKIWSGESPLWRLLLPLSWLYGLVSGAIRLCYKLKLKRAWRAPVPVVVVGNLTAGGNGKTPVVVWLVEQLQQRGIRVGVVSRGYGGKAESYPLLLSADTTTAQAGDEPVLIYQRTDAPVAVSPVRSDAVKAILAQHPDVQIIVTDDGLQHYRLARDVEIVVIDGVRRFGNGWWLPAGPMRERAGRLKSVDAVIVNGGVPRSGEIPMHLLPGQAVNLRTGTRCDVAQLEHVVAMAGIGHPPRFFATLKMCGVQPEKCVPLADHQSLNHADVSALVSAGQTLVMTEKDAVKCRAFAEENWWYLPVDAQLSGDEPAKLLTQLTSLASGN</sequence>
<name>LPXK_SHIFL</name>
<protein>
    <recommendedName>
        <fullName evidence="1">Tetraacyldisaccharide 4'-kinase</fullName>
        <ecNumber evidence="1">2.7.1.130</ecNumber>
    </recommendedName>
    <alternativeName>
        <fullName evidence="1">Lipid A 4'-kinase</fullName>
    </alternativeName>
</protein>
<accession>Q83RY7</accession>
<accession>Q7C290</accession>
<organism>
    <name type="scientific">Shigella flexneri</name>
    <dbReference type="NCBI Taxonomy" id="623"/>
    <lineage>
        <taxon>Bacteria</taxon>
        <taxon>Pseudomonadati</taxon>
        <taxon>Pseudomonadota</taxon>
        <taxon>Gammaproteobacteria</taxon>
        <taxon>Enterobacterales</taxon>
        <taxon>Enterobacteriaceae</taxon>
        <taxon>Shigella</taxon>
    </lineage>
</organism>
<keyword id="KW-0067">ATP-binding</keyword>
<keyword id="KW-0418">Kinase</keyword>
<keyword id="KW-0441">Lipid A biosynthesis</keyword>
<keyword id="KW-0444">Lipid biosynthesis</keyword>
<keyword id="KW-0443">Lipid metabolism</keyword>
<keyword id="KW-0547">Nucleotide-binding</keyword>
<keyword id="KW-1185">Reference proteome</keyword>
<keyword id="KW-0808">Transferase</keyword>
<feature type="chain" id="PRO_0000190952" description="Tetraacyldisaccharide 4'-kinase">
    <location>
        <begin position="1"/>
        <end position="328"/>
    </location>
</feature>
<feature type="binding site" evidence="1">
    <location>
        <begin position="55"/>
        <end position="62"/>
    </location>
    <ligand>
        <name>ATP</name>
        <dbReference type="ChEBI" id="CHEBI:30616"/>
    </ligand>
</feature>